<protein>
    <recommendedName>
        <fullName>Vesicle-associated membrane protein 1</fullName>
        <shortName>VAMP-1</shortName>
    </recommendedName>
    <alternativeName>
        <fullName>Synaptobrevin-1</fullName>
    </alternativeName>
</protein>
<evidence type="ECO:0000250" key="1"/>
<evidence type="ECO:0000250" key="2">
    <source>
        <dbReference type="UniProtKB" id="P23763"/>
    </source>
</evidence>
<evidence type="ECO:0000250" key="3">
    <source>
        <dbReference type="UniProtKB" id="Q62442"/>
    </source>
</evidence>
<evidence type="ECO:0000255" key="4"/>
<evidence type="ECO:0000255" key="5">
    <source>
        <dbReference type="PROSITE-ProRule" id="PRU00290"/>
    </source>
</evidence>
<evidence type="ECO:0000256" key="6">
    <source>
        <dbReference type="SAM" id="MobiDB-lite"/>
    </source>
</evidence>
<evidence type="ECO:0000269" key="7">
    <source>
    </source>
</evidence>
<evidence type="ECO:0000269" key="8">
    <source>
    </source>
</evidence>
<evidence type="ECO:0000269" key="9">
    <source>
    </source>
</evidence>
<evidence type="ECO:0000269" key="10">
    <source>
    </source>
</evidence>
<evidence type="ECO:0000303" key="11">
    <source>
    </source>
</evidence>
<evidence type="ECO:0000303" key="12">
    <source>
    </source>
</evidence>
<evidence type="ECO:0000303" key="13">
    <source ref="4"/>
</evidence>
<evidence type="ECO:0000305" key="14"/>
<evidence type="ECO:0000305" key="15">
    <source>
    </source>
</evidence>
<accession>Q63666</accession>
<accession>A6YSN3</accession>
<accession>O09025</accession>
<accession>Q56A22</accession>
<accession>Q8CH14</accession>
<proteinExistence type="evidence at protein level"/>
<dbReference type="EMBL" id="M24104">
    <property type="protein sequence ID" value="AAA42322.1"/>
    <property type="molecule type" value="mRNA"/>
</dbReference>
<dbReference type="EMBL" id="U74621">
    <property type="protein sequence ID" value="AAC53427.1"/>
    <property type="molecule type" value="mRNA"/>
</dbReference>
<dbReference type="EMBL" id="AF498262">
    <property type="protein sequence ID" value="AAN85832.1"/>
    <property type="molecule type" value="mRNA"/>
</dbReference>
<dbReference type="EMBL" id="EF653274">
    <property type="protein sequence ID" value="ABR68027.1"/>
    <property type="molecule type" value="mRNA"/>
</dbReference>
<dbReference type="EMBL" id="EF653275">
    <property type="protein sequence ID" value="ABR68028.1"/>
    <property type="molecule type" value="mRNA"/>
</dbReference>
<dbReference type="EMBL" id="BC092206">
    <property type="protein sequence ID" value="AAH92206.1"/>
    <property type="molecule type" value="mRNA"/>
</dbReference>
<dbReference type="PIR" id="A34288">
    <property type="entry name" value="A34288"/>
</dbReference>
<dbReference type="RefSeq" id="NP_037222.2">
    <molecule id="Q63666-1"/>
    <property type="nucleotide sequence ID" value="NM_013090.2"/>
</dbReference>
<dbReference type="SMR" id="Q63666"/>
<dbReference type="BioGRID" id="247653">
    <property type="interactions" value="3"/>
</dbReference>
<dbReference type="FunCoup" id="Q63666">
    <property type="interactions" value="693"/>
</dbReference>
<dbReference type="IntAct" id="Q63666">
    <property type="interactions" value="6"/>
</dbReference>
<dbReference type="MINT" id="Q63666"/>
<dbReference type="STRING" id="10116.ENSRNOP00000025081"/>
<dbReference type="iPTMnet" id="Q63666"/>
<dbReference type="PhosphoSitePlus" id="Q63666"/>
<dbReference type="SwissPalm" id="Q63666"/>
<dbReference type="PaxDb" id="10116-ENSRNOP00000025081"/>
<dbReference type="Ensembl" id="ENSRNOT00000025081.6">
    <molecule id="Q63666-1"/>
    <property type="protein sequence ID" value="ENSRNOP00000025081.7"/>
    <property type="gene ID" value="ENSRNOG00000019219.8"/>
</dbReference>
<dbReference type="Ensembl" id="ENSRNOT00000096098.1">
    <molecule id="Q63666-4"/>
    <property type="protein sequence ID" value="ENSRNOP00000076937.1"/>
    <property type="gene ID" value="ENSRNOG00000019219.8"/>
</dbReference>
<dbReference type="GeneID" id="25624"/>
<dbReference type="KEGG" id="rno:25624"/>
<dbReference type="UCSC" id="RGD:3948">
    <molecule id="Q63666-1"/>
    <property type="organism name" value="rat"/>
</dbReference>
<dbReference type="AGR" id="RGD:3948"/>
<dbReference type="CTD" id="6843"/>
<dbReference type="RGD" id="3948">
    <property type="gene designation" value="Vamp1"/>
</dbReference>
<dbReference type="eggNOG" id="KOG0860">
    <property type="taxonomic scope" value="Eukaryota"/>
</dbReference>
<dbReference type="GeneTree" id="ENSGT00940000161390"/>
<dbReference type="HOGENOM" id="CLU_064620_4_0_1"/>
<dbReference type="InParanoid" id="Q63666"/>
<dbReference type="OMA" id="CKYNTMK"/>
<dbReference type="OrthoDB" id="84017at9989"/>
<dbReference type="PhylomeDB" id="Q63666"/>
<dbReference type="TreeFam" id="TF313666"/>
<dbReference type="PRO" id="PR:Q63666"/>
<dbReference type="Proteomes" id="UP000002494">
    <property type="component" value="Chromosome 4"/>
</dbReference>
<dbReference type="Bgee" id="ENSRNOG00000019219">
    <property type="expression patterns" value="Expressed in cerebellum and 20 other cell types or tissues"/>
</dbReference>
<dbReference type="GO" id="GO:0009986">
    <property type="term" value="C:cell surface"/>
    <property type="evidence" value="ECO:0000266"/>
    <property type="project" value="RGD"/>
</dbReference>
<dbReference type="GO" id="GO:0098978">
    <property type="term" value="C:glutamatergic synapse"/>
    <property type="evidence" value="ECO:0000266"/>
    <property type="project" value="RGD"/>
</dbReference>
<dbReference type="GO" id="GO:0005741">
    <property type="term" value="C:mitochondrial outer membrane"/>
    <property type="evidence" value="ECO:0007669"/>
    <property type="project" value="UniProtKB-SubCell"/>
</dbReference>
<dbReference type="GO" id="GO:0031594">
    <property type="term" value="C:neuromuscular junction"/>
    <property type="evidence" value="ECO:0000266"/>
    <property type="project" value="RGD"/>
</dbReference>
<dbReference type="GO" id="GO:0005886">
    <property type="term" value="C:plasma membrane"/>
    <property type="evidence" value="ECO:0000318"/>
    <property type="project" value="GO_Central"/>
</dbReference>
<dbReference type="GO" id="GO:0098793">
    <property type="term" value="C:presynapse"/>
    <property type="evidence" value="ECO:0000314"/>
    <property type="project" value="SynGO"/>
</dbReference>
<dbReference type="GO" id="GO:0031201">
    <property type="term" value="C:SNARE complex"/>
    <property type="evidence" value="ECO:0000318"/>
    <property type="project" value="GO_Central"/>
</dbReference>
<dbReference type="GO" id="GO:0035579">
    <property type="term" value="C:specific granule membrane"/>
    <property type="evidence" value="ECO:0000266"/>
    <property type="project" value="RGD"/>
</dbReference>
<dbReference type="GO" id="GO:0030672">
    <property type="term" value="C:synaptic vesicle membrane"/>
    <property type="evidence" value="ECO:0007669"/>
    <property type="project" value="UniProtKB-SubCell"/>
</dbReference>
<dbReference type="GO" id="GO:0043195">
    <property type="term" value="C:terminal bouton"/>
    <property type="evidence" value="ECO:0007005"/>
    <property type="project" value="ParkinsonsUK-UCL"/>
</dbReference>
<dbReference type="GO" id="GO:0070821">
    <property type="term" value="C:tertiary granule membrane"/>
    <property type="evidence" value="ECO:0000266"/>
    <property type="project" value="RGD"/>
</dbReference>
<dbReference type="GO" id="GO:0005484">
    <property type="term" value="F:SNAP receptor activity"/>
    <property type="evidence" value="ECO:0000318"/>
    <property type="project" value="GO_Central"/>
</dbReference>
<dbReference type="GO" id="GO:0019905">
    <property type="term" value="F:syntaxin binding"/>
    <property type="evidence" value="ECO:0000318"/>
    <property type="project" value="GO_Central"/>
</dbReference>
<dbReference type="GO" id="GO:0006886">
    <property type="term" value="P:intracellular protein transport"/>
    <property type="evidence" value="ECO:0000304"/>
    <property type="project" value="RGD"/>
</dbReference>
<dbReference type="GO" id="GO:0031630">
    <property type="term" value="P:regulation of synaptic vesicle fusion to presynaptic active zone membrane"/>
    <property type="evidence" value="ECO:0000266"/>
    <property type="project" value="RGD"/>
</dbReference>
<dbReference type="GO" id="GO:0035493">
    <property type="term" value="P:SNARE complex assembly"/>
    <property type="evidence" value="ECO:0000266"/>
    <property type="project" value="RGD"/>
</dbReference>
<dbReference type="GO" id="GO:0016082">
    <property type="term" value="P:synaptic vesicle priming"/>
    <property type="evidence" value="ECO:0000266"/>
    <property type="project" value="RGD"/>
</dbReference>
<dbReference type="GO" id="GO:0006906">
    <property type="term" value="P:vesicle fusion"/>
    <property type="evidence" value="ECO:0000318"/>
    <property type="project" value="GO_Central"/>
</dbReference>
<dbReference type="GO" id="GO:0016192">
    <property type="term" value="P:vesicle-mediated transport"/>
    <property type="evidence" value="ECO:0000304"/>
    <property type="project" value="RGD"/>
</dbReference>
<dbReference type="CDD" id="cd15870">
    <property type="entry name" value="R-SNARE_VAMP2"/>
    <property type="match status" value="1"/>
</dbReference>
<dbReference type="FunFam" id="1.20.5.110:FF:000013">
    <property type="entry name" value="Vesicle-associated membrane protein 2"/>
    <property type="match status" value="1"/>
</dbReference>
<dbReference type="Gene3D" id="1.20.5.110">
    <property type="match status" value="1"/>
</dbReference>
<dbReference type="InterPro" id="IPR001388">
    <property type="entry name" value="Synaptobrevin-like"/>
</dbReference>
<dbReference type="InterPro" id="IPR016444">
    <property type="entry name" value="Synaptobrevin/VAMP"/>
</dbReference>
<dbReference type="InterPro" id="IPR042855">
    <property type="entry name" value="V_SNARE_CC"/>
</dbReference>
<dbReference type="PANTHER" id="PTHR45701">
    <property type="entry name" value="SYNAPTOBREVIN FAMILY MEMBER"/>
    <property type="match status" value="1"/>
</dbReference>
<dbReference type="Pfam" id="PF00957">
    <property type="entry name" value="Synaptobrevin"/>
    <property type="match status" value="1"/>
</dbReference>
<dbReference type="PIRSF" id="PIRSF005409">
    <property type="entry name" value="Synaptobrevin_euk"/>
    <property type="match status" value="1"/>
</dbReference>
<dbReference type="PRINTS" id="PR00219">
    <property type="entry name" value="SYNAPTOBREVN"/>
</dbReference>
<dbReference type="SUPFAM" id="SSF58038">
    <property type="entry name" value="SNARE fusion complex"/>
    <property type="match status" value="1"/>
</dbReference>
<dbReference type="PROSITE" id="PS00417">
    <property type="entry name" value="SYNAPTOBREVIN"/>
    <property type="match status" value="1"/>
</dbReference>
<dbReference type="PROSITE" id="PS50892">
    <property type="entry name" value="V_SNARE"/>
    <property type="match status" value="1"/>
</dbReference>
<sequence>MSAPAQPPAEGTEGAAPGGGPPGPPPNTTSNRRLQQTQAQVEEVVDIMRVNVDKVLERDQKLSELDDRADALQAGASVFESSAAKLKRKYWWKNCKMMIMLGAICAIIVVVIVIYIFT</sequence>
<feature type="chain" id="PRO_0000206721" description="Vesicle-associated membrane protein 1">
    <location>
        <begin position="1"/>
        <end position="118"/>
    </location>
</feature>
<feature type="topological domain" description="Cytoplasmic" evidence="4">
    <location>
        <begin position="1"/>
        <end position="96"/>
    </location>
</feature>
<feature type="transmembrane region" description="Helical; Anchor for type IV membrane protein" evidence="4">
    <location>
        <begin position="97"/>
        <end position="116"/>
    </location>
</feature>
<feature type="topological domain" description="Vesicular" evidence="4">
    <location>
        <begin position="117"/>
        <end position="118"/>
    </location>
</feature>
<feature type="domain" description="v-SNARE coiled-coil homology" evidence="5">
    <location>
        <begin position="33"/>
        <end position="93"/>
    </location>
</feature>
<feature type="region of interest" description="Disordered" evidence="6">
    <location>
        <begin position="1"/>
        <end position="38"/>
    </location>
</feature>
<feature type="compositionally biased region" description="Low complexity" evidence="6">
    <location>
        <begin position="1"/>
        <end position="15"/>
    </location>
</feature>
<feature type="compositionally biased region" description="Polar residues" evidence="6">
    <location>
        <begin position="28"/>
        <end position="38"/>
    </location>
</feature>
<feature type="site" description="(Microbial infection) Cleavage; by C.botulinum neurotoxin type F (BoNT/F, botF)" evidence="7 9">
    <location>
        <begin position="60"/>
        <end position="61"/>
    </location>
</feature>
<feature type="site" description="(Microbial infection) Cleavage; by C.botulinum neurotoxin type D (BoNT/D, botD)" evidence="8">
    <location>
        <begin position="61"/>
        <end position="62"/>
    </location>
</feature>
<feature type="modified residue" description="Phosphoserine" evidence="3">
    <location>
        <position position="63"/>
    </location>
</feature>
<feature type="splice variant" id="VSP_029188" description="In isoform 2." evidence="11 12">
    <original>IYIFT</original>
    <variation>SKYR</variation>
    <location>
        <begin position="114"/>
        <end position="118"/>
    </location>
</feature>
<feature type="splice variant" id="VSP_029187" description="In isoform 3." evidence="11 13">
    <original>IYIFT</original>
    <variation>RQD</variation>
    <location>
        <begin position="114"/>
        <end position="118"/>
    </location>
</feature>
<feature type="splice variant" id="VSP_029189" description="In isoform 4." evidence="13">
    <original>IYIFT</original>
    <variation>NSGTEDRSCSVCFGSFC</variation>
    <location>
        <begin position="114"/>
        <end position="118"/>
    </location>
</feature>
<feature type="sequence conflict" description="In Ref. 1; AAA42322." evidence="14" ref="1">
    <original>M</original>
    <variation>I</variation>
    <location>
        <position position="48"/>
    </location>
</feature>
<feature type="sequence conflict" description="In Ref. 5; AAH92206." evidence="14" ref="5">
    <original>R</original>
    <variation>C</variation>
    <location>
        <position position="49"/>
    </location>
</feature>
<keyword id="KW-0025">Alternative splicing</keyword>
<keyword id="KW-0175">Coiled coil</keyword>
<keyword id="KW-0968">Cytoplasmic vesicle</keyword>
<keyword id="KW-0903">Direct protein sequencing</keyword>
<keyword id="KW-0472">Membrane</keyword>
<keyword id="KW-0496">Mitochondrion</keyword>
<keyword id="KW-1000">Mitochondrion outer membrane</keyword>
<keyword id="KW-0597">Phosphoprotein</keyword>
<keyword id="KW-1185">Reference proteome</keyword>
<keyword id="KW-0770">Synapse</keyword>
<keyword id="KW-0771">Synaptosome</keyword>
<keyword id="KW-0812">Transmembrane</keyword>
<keyword id="KW-1133">Transmembrane helix</keyword>
<reference key="1">
    <citation type="journal article" date="1989" name="J. Biol. Chem.">
        <title>Two vesicle-associated membrane protein genes are differentially expressed in the rat central nervous system.</title>
        <authorList>
            <person name="Elferink L.A."/>
            <person name="Trimble W.S."/>
            <person name="Scheller R.H."/>
        </authorList>
    </citation>
    <scope>NUCLEOTIDE SEQUENCE [MRNA] (ISOFORM 1)</scope>
</reference>
<reference key="2">
    <citation type="journal article" date="1997" name="Gene">
        <title>Tissue-specific alternative RNA splicing of rat vesicle-associated membrane protein-1 (VAMP-1).</title>
        <authorList>
            <person name="Mandic R."/>
            <person name="Trimble W.S."/>
            <person name="Lowe A.W."/>
        </authorList>
    </citation>
    <scope>NUCLEOTIDE SEQUENCE [MRNA] (ISOFORM 2)</scope>
    <scope>SUBCELLULAR LOCATION</scope>
    <scope>TISSUE SPECIFICITY</scope>
</reference>
<reference key="3">
    <citation type="journal article" date="2003" name="Exp. Cell Res.">
        <title>Identification of the molecular mechanisms contributing to polarized trafficking in osteoblasts.</title>
        <authorList>
            <person name="Prele C.M."/>
            <person name="Horton M.A."/>
            <person name="Caterina P."/>
            <person name="Stenbeck G."/>
        </authorList>
    </citation>
    <scope>NUCLEOTIDE SEQUENCE [MRNA] (ISOFORMS 2 AND 3)</scope>
    <source>
        <strain>Wistar</strain>
        <tissue>Osteoblast</tissue>
    </source>
</reference>
<reference key="4">
    <citation type="submission" date="2007-06" db="EMBL/GenBank/DDBJ databases">
        <title>Identification of a novel Vamp1 splice variant in the cochlear nucleus containing intra-vesicular kinase recognition sites.</title>
        <authorList>
            <person name="Friedland D.R."/>
            <person name="Eernisse R."/>
            <person name="Popper P."/>
        </authorList>
    </citation>
    <scope>NUCLEOTIDE SEQUENCE [MRNA] (ISOFORMS 3 AND 4)</scope>
    <source>
        <strain>Brown Norway</strain>
        <tissue>Cochlear nucleus</tissue>
    </source>
</reference>
<reference key="5">
    <citation type="journal article" date="2004" name="Genome Res.">
        <title>The status, quality, and expansion of the NIH full-length cDNA project: the Mammalian Gene Collection (MGC).</title>
        <authorList>
            <consortium name="The MGC Project Team"/>
        </authorList>
    </citation>
    <scope>NUCLEOTIDE SEQUENCE [LARGE SCALE MRNA] (ISOFORM 1)</scope>
    <source>
        <tissue>Brain</tissue>
    </source>
</reference>
<reference key="6">
    <citation type="journal article" date="1993" name="J. Biol. Chem.">
        <title>Botulinum neurotoxin serotype F is a zinc endopeptidase specific for VAMP/synaptobrevin.</title>
        <authorList>
            <person name="Schiavo G."/>
            <person name="Shone C.C."/>
            <person name="Rossetto O."/>
            <person name="Alexander F.C."/>
            <person name="Montecucco C."/>
        </authorList>
    </citation>
    <scope>PROTEIN SEQUENCE OF 61-84</scope>
    <scope>PROTEOLYTIC CLEAVAGE (MICROBIAL INFECTION) BY C.BOTULINUM NEUROTOXIN TYPE F</scope>
</reference>
<reference key="7">
    <citation type="journal article" date="1992" name="Nature">
        <title>Tetanus and botulinum-B neurotoxins block neurotransmitter release by proteolytic cleavage of synaptobrevin.</title>
        <authorList>
            <person name="Schiavo G."/>
            <person name="Benfenati F."/>
            <person name="Poulain B."/>
            <person name="Rossetto O."/>
            <person name="de Laureto P.P."/>
            <person name="Dasgupta B.R."/>
            <person name="Montecucco C."/>
        </authorList>
    </citation>
    <scope>PROTEIN SEQUENCE OF 94-101</scope>
    <scope>NOT TARGET OF TETANUS OR C.BOTULINUM NEUROTOXIN TYPE B</scope>
</reference>
<reference key="8">
    <citation type="journal article" date="1994" name="J. Biol. Chem.">
        <title>Cleavage of members of the synaptobrevin/VAMP family by types D and F botulinal neurotoxins and tetanus toxin.</title>
        <authorList>
            <person name="Yamasaki S."/>
            <person name="Baumeister A."/>
            <person name="Binz T."/>
            <person name="Blasi J."/>
            <person name="Link E."/>
            <person name="Cornille F."/>
            <person name="Roques B."/>
            <person name="Fykse E.M."/>
            <person name="Suedhof T.C."/>
            <person name="Jahn R."/>
            <person name="Niemann H."/>
        </authorList>
    </citation>
    <scope>PROTEOLYTIC CLEAVAGE (MICROBIAL INFECTION) BY C.BOTULINUM NEUROTOXIN TYPES D AND F</scope>
</reference>
<name>VAMP1_RAT</name>
<gene>
    <name type="primary">Vamp1</name>
    <name type="synonym">Syb1</name>
</gene>
<comment type="function">
    <text>Involved in the targeting and/or fusion of transport vesicles to their target membrane.</text>
</comment>
<comment type="subunit">
    <text evidence="1">Interacts with VAPA and VAPB.</text>
</comment>
<comment type="interaction">
    <interactant intactId="EBI-2029956">
        <id>Q63666</id>
    </interactant>
    <interactant intactId="EBI-915654">
        <id>G3V7P1</id>
        <label>Stx12</label>
    </interactant>
    <organismsDiffer>false</organismsDiffer>
    <experiments>3</experiments>
</comment>
<comment type="subcellular location">
    <molecule>Isoform 1</molecule>
    <subcellularLocation>
        <location>Cytoplasmic vesicle</location>
        <location>Secretory vesicle</location>
        <location>Synaptic vesicle membrane</location>
        <topology>Single-pass type IV membrane protein</topology>
    </subcellularLocation>
    <subcellularLocation>
        <location evidence="1">Synapse</location>
        <location evidence="1">Synaptosome</location>
    </subcellularLocation>
</comment>
<comment type="subcellular location">
    <molecule>Isoform 2</molecule>
    <subcellularLocation>
        <location>Cytoplasmic vesicle membrane</location>
        <topology>Single-pass type IV membrane protein</topology>
    </subcellularLocation>
    <text>Isoforms 2 and 3 are found in perinuclear as well as peripheral punctate structures in osteoblasts.</text>
</comment>
<comment type="subcellular location">
    <molecule>Isoform 3</molecule>
    <subcellularLocation>
        <location>Mitochondrion outer membrane</location>
        <topology>Single-pass type IV membrane protein</topology>
    </subcellularLocation>
    <text evidence="2">Isoforms 2 and 3 are found in perinuclear as well as peripheral punctate structures in osteoblasts.</text>
</comment>
<comment type="alternative products">
    <event type="alternative splicing"/>
    <isoform>
        <id>Q63666-1</id>
        <name>1</name>
        <name>Vamp1a</name>
        <sequence type="displayed"/>
    </isoform>
    <isoform>
        <id>Q63666-2</id>
        <name>2</name>
        <name>Vamp1b</name>
        <sequence type="described" ref="VSP_029188"/>
    </isoform>
    <isoform>
        <id>Q63666-3</id>
        <name>3</name>
        <name>Vamp1-ob</name>
        <sequence type="described" ref="VSP_029187"/>
    </isoform>
    <isoform>
        <id>Q63666-4</id>
        <name>4</name>
        <sequence type="described" ref="VSP_029189"/>
    </isoform>
</comment>
<comment type="tissue specificity">
    <text evidence="10">Expressed in brain and spleen (at protein level). Isoform 1 expressed at very high level in brain. Even higher level found in spinal cord. Isoform 3 expressed in kidney, spleen and liver. Isoforms 2 and 3 expressed in osteoblasts of trabecular bone. Also expressed in heart.</text>
</comment>
<comment type="PTM">
    <text evidence="7">(Microbial infection) Targeted and hydrolyzed by C.botulinum neurotoxin type D (BoNT/D, botD) which hydrolyzes the 61-Lys-|-Leu-62 bond and inhibits neurotransmitter release (PubMed:8175689). This is a poor substrate for BoNT/D, high concentrations are required to cleave it in vitro (PubMed:8175689).</text>
</comment>
<comment type="PTM">
    <text evidence="7 9 15">(Microbial infection) Targeted and hydrolyzed by C.botulinum neurotoxin type F (BoNT/F, botF) which hydrolyzes the 60-Gln-|-Lys-61 bond and inhibits neurotransmitter release (PubMed:8505288).</text>
</comment>
<comment type="miscellaneous">
    <text evidence="7 8">Is not targeted by C.botulinum neurotoxin type B (BoNT/B) or by C.tetani toxin (tetX) as their target sequence is not conserved in this protein (PubMed:1331807, PubMed:8175689).</text>
</comment>
<comment type="similarity">
    <text evidence="14">Belongs to the synaptobrevin family.</text>
</comment>
<organism>
    <name type="scientific">Rattus norvegicus</name>
    <name type="common">Rat</name>
    <dbReference type="NCBI Taxonomy" id="10116"/>
    <lineage>
        <taxon>Eukaryota</taxon>
        <taxon>Metazoa</taxon>
        <taxon>Chordata</taxon>
        <taxon>Craniata</taxon>
        <taxon>Vertebrata</taxon>
        <taxon>Euteleostomi</taxon>
        <taxon>Mammalia</taxon>
        <taxon>Eutheria</taxon>
        <taxon>Euarchontoglires</taxon>
        <taxon>Glires</taxon>
        <taxon>Rodentia</taxon>
        <taxon>Myomorpha</taxon>
        <taxon>Muroidea</taxon>
        <taxon>Muridae</taxon>
        <taxon>Murinae</taxon>
        <taxon>Rattus</taxon>
    </lineage>
</organism>